<keyword id="KW-0963">Cytoplasm</keyword>
<keyword id="KW-1017">Isopeptide bond</keyword>
<keyword id="KW-0539">Nucleus</keyword>
<keyword id="KW-0597">Phosphoprotein</keyword>
<keyword id="KW-1185">Reference proteome</keyword>
<keyword id="KW-0678">Repressor</keyword>
<keyword id="KW-0804">Transcription</keyword>
<keyword id="KW-0805">Transcription regulation</keyword>
<keyword id="KW-0832">Ubl conjugation</keyword>
<comment type="function">
    <text evidence="8 9">Functions as a transcriptional repressor. Seems to function as a transcriptional corepressor in neuronal cells through recruitment of HDAC3 and HDAC4. Contributes to tumor progression, and tumor cell proliferation and survival. This may be mediated at least in part through repressing transcriptional activity of GADD45GIP1. Required for recruiting the proteasome from the nucleus to the cytoplasm and dendritic spines. Involved in the acute behavioral and neurological responses to cocaine and amphetamines.</text>
</comment>
<comment type="subunit">
    <text evidence="1">Homooligomer; mediated by the BTB domain. Interacts with HDAC3 and HDAC4. Interacts (via BTB domain) with CUL3, PSMD7 and RCOR1 (By similarity).</text>
</comment>
<comment type="interaction">
    <interactant intactId="EBI-5691985">
        <id>Q7TSZ8</id>
    </interactant>
    <interactant intactId="EBI-2312582">
        <id>Q8BX22</id>
        <label>Sall4</label>
    </interactant>
    <organismsDiffer>false</organismsDiffer>
    <experiments>4</experiments>
</comment>
<comment type="subcellular location">
    <subcellularLocation>
        <location>Nucleus</location>
    </subcellularLocation>
    <subcellularLocation>
        <location>Cytoplasm</location>
    </subcellularLocation>
    <text evidence="1">Distribution in the cytoplasm is dependent on phosphorylation.</text>
</comment>
<comment type="tissue specificity">
    <text evidence="7">Ubiquitously expressed with higher expression in the brain, kidney and liver, and at lower levels in heart, lung and testes.</text>
</comment>
<comment type="disruption phenotype">
    <text evidence="9">Mice are viable with no obvious developmental or physiological impairments. In addition, they do not display alterations in chronic responses to cocaine and amphetamine administration, but do however display significantly diminished acute behavioral and neurochemical responses to these drugs.</text>
</comment>
<feature type="chain" id="PRO_0000274042" description="Nucleus accumbens-associated protein 1">
    <location>
        <begin position="1"/>
        <end position="514"/>
    </location>
</feature>
<feature type="domain" description="BTB" evidence="4">
    <location>
        <begin position="30"/>
        <end position="94"/>
    </location>
</feature>
<feature type="domain" description="BEN" evidence="5">
    <location>
        <begin position="360"/>
        <end position="457"/>
    </location>
</feature>
<feature type="region of interest" description="Disordered" evidence="6">
    <location>
        <begin position="183"/>
        <end position="205"/>
    </location>
</feature>
<feature type="region of interest" description="Disordered" evidence="6">
    <location>
        <begin position="242"/>
        <end position="279"/>
    </location>
</feature>
<feature type="compositionally biased region" description="Polar residues" evidence="6">
    <location>
        <begin position="242"/>
        <end position="251"/>
    </location>
</feature>
<feature type="compositionally biased region" description="Low complexity" evidence="6">
    <location>
        <begin position="252"/>
        <end position="264"/>
    </location>
</feature>
<feature type="compositionally biased region" description="Acidic residues" evidence="6">
    <location>
        <begin position="267"/>
        <end position="279"/>
    </location>
</feature>
<feature type="modified residue" description="Phosphoserine" evidence="3">
    <location>
        <position position="187"/>
    </location>
</feature>
<feature type="modified residue" description="Phosphoserine; by PKC" evidence="2">
    <location>
        <position position="245"/>
    </location>
</feature>
<feature type="modified residue" description="Phosphoserine" evidence="11">
    <location>
        <position position="492"/>
    </location>
</feature>
<feature type="modified residue" description="Phosphoserine" evidence="11">
    <location>
        <position position="496"/>
    </location>
</feature>
<feature type="cross-link" description="Glycyl lysine isopeptide (Lys-Gly) (interchain with G-Cter in SUMO1); alternate" evidence="3">
    <location>
        <position position="167"/>
    </location>
</feature>
<feature type="cross-link" description="Glycyl lysine isopeptide (Lys-Gly) (interchain with G-Cter in SUMO2); alternate" evidence="3">
    <location>
        <position position="167"/>
    </location>
</feature>
<feature type="cross-link" description="Glycyl lysine isopeptide (Lys-Gly) (interchain with G-Cter in SUMO2)" evidence="3">
    <location>
        <position position="182"/>
    </location>
</feature>
<feature type="cross-link" description="Glycyl lysine isopeptide (Lys-Gly) (interchain with G-Cter in SUMO2)" evidence="3">
    <location>
        <position position="304"/>
    </location>
</feature>
<feature type="cross-link" description="Glycyl lysine isopeptide (Lys-Gly) (interchain with G-Cter in SUMO2)" evidence="3">
    <location>
        <position position="438"/>
    </location>
</feature>
<feature type="cross-link" description="Glycyl lysine isopeptide (Lys-Gly) (interchain with G-Cter in SUMO2)" evidence="3">
    <location>
        <position position="466"/>
    </location>
</feature>
<feature type="cross-link" description="Glycyl lysine isopeptide (Lys-Gly) (interchain with G-Cter in SUMO2)" evidence="3">
    <location>
        <position position="485"/>
    </location>
</feature>
<feature type="sequence conflict" description="In Ref. 1; BAB28558." evidence="10" ref="1">
    <original>S</original>
    <variation>R</variation>
    <location>
        <position position="401"/>
    </location>
</feature>
<feature type="sequence conflict" description="In Ref. 2; AAH48157." evidence="10" ref="2">
    <original>G</original>
    <variation>V</variation>
    <location>
        <position position="403"/>
    </location>
</feature>
<organism>
    <name type="scientific">Mus musculus</name>
    <name type="common">Mouse</name>
    <dbReference type="NCBI Taxonomy" id="10090"/>
    <lineage>
        <taxon>Eukaryota</taxon>
        <taxon>Metazoa</taxon>
        <taxon>Chordata</taxon>
        <taxon>Craniata</taxon>
        <taxon>Vertebrata</taxon>
        <taxon>Euteleostomi</taxon>
        <taxon>Mammalia</taxon>
        <taxon>Eutheria</taxon>
        <taxon>Euarchontoglires</taxon>
        <taxon>Glires</taxon>
        <taxon>Rodentia</taxon>
        <taxon>Myomorpha</taxon>
        <taxon>Muroidea</taxon>
        <taxon>Muridae</taxon>
        <taxon>Murinae</taxon>
        <taxon>Mus</taxon>
        <taxon>Mus</taxon>
    </lineage>
</organism>
<protein>
    <recommendedName>
        <fullName>Nucleus accumbens-associated protein 1</fullName>
        <shortName>NAC-1</shortName>
    </recommendedName>
    <alternativeName>
        <fullName>BTB/POZ domain-containing protein 14B</fullName>
    </alternativeName>
</protein>
<dbReference type="EMBL" id="AK012935">
    <property type="protein sequence ID" value="BAB28558.1"/>
    <property type="molecule type" value="mRNA"/>
</dbReference>
<dbReference type="EMBL" id="BC048157">
    <property type="protein sequence ID" value="AAH48157.1"/>
    <property type="molecule type" value="mRNA"/>
</dbReference>
<dbReference type="EMBL" id="BC052706">
    <property type="protein sequence ID" value="AAH52706.1"/>
    <property type="molecule type" value="mRNA"/>
</dbReference>
<dbReference type="EMBL" id="BC054800">
    <property type="protein sequence ID" value="AAH54800.1"/>
    <property type="molecule type" value="mRNA"/>
</dbReference>
<dbReference type="CCDS" id="CCDS22475.1"/>
<dbReference type="RefSeq" id="NP_080064.3">
    <property type="nucleotide sequence ID" value="NM_025788.3"/>
</dbReference>
<dbReference type="RefSeq" id="XP_006531355.1">
    <property type="nucleotide sequence ID" value="XM_006531292.4"/>
</dbReference>
<dbReference type="RefSeq" id="XP_006531356.1">
    <property type="nucleotide sequence ID" value="XM_006531293.5"/>
</dbReference>
<dbReference type="RefSeq" id="XP_006531357.1">
    <property type="nucleotide sequence ID" value="XM_006531294.5"/>
</dbReference>
<dbReference type="SMR" id="Q7TSZ8"/>
<dbReference type="BioGRID" id="211748">
    <property type="interactions" value="22"/>
</dbReference>
<dbReference type="CORUM" id="Q7TSZ8"/>
<dbReference type="DIP" id="DIP-29930N"/>
<dbReference type="FunCoup" id="Q7TSZ8">
    <property type="interactions" value="2644"/>
</dbReference>
<dbReference type="IntAct" id="Q7TSZ8">
    <property type="interactions" value="6"/>
</dbReference>
<dbReference type="MINT" id="Q7TSZ8"/>
<dbReference type="STRING" id="10090.ENSMUSP00000001975"/>
<dbReference type="iPTMnet" id="Q7TSZ8"/>
<dbReference type="PhosphoSitePlus" id="Q7TSZ8"/>
<dbReference type="PaxDb" id="10090-ENSMUSP00000001975"/>
<dbReference type="PeptideAtlas" id="Q7TSZ8"/>
<dbReference type="ProteomicsDB" id="287353"/>
<dbReference type="Pumba" id="Q7TSZ8"/>
<dbReference type="Antibodypedia" id="13525">
    <property type="antibodies" value="313 antibodies from 37 providers"/>
</dbReference>
<dbReference type="DNASU" id="66830"/>
<dbReference type="Ensembl" id="ENSMUST00000001975.6">
    <property type="protein sequence ID" value="ENSMUSP00000001975.5"/>
    <property type="gene ID" value="ENSMUSG00000001910.6"/>
</dbReference>
<dbReference type="GeneID" id="66830"/>
<dbReference type="KEGG" id="mmu:66830"/>
<dbReference type="UCSC" id="uc009mmu.2">
    <property type="organism name" value="mouse"/>
</dbReference>
<dbReference type="AGR" id="MGI:1914080"/>
<dbReference type="CTD" id="112939"/>
<dbReference type="MGI" id="MGI:1914080">
    <property type="gene designation" value="Nacc1"/>
</dbReference>
<dbReference type="VEuPathDB" id="HostDB:ENSMUSG00000001910"/>
<dbReference type="eggNOG" id="KOG1721">
    <property type="taxonomic scope" value="Eukaryota"/>
</dbReference>
<dbReference type="GeneTree" id="ENSGT00940000159327"/>
<dbReference type="HOGENOM" id="CLU_029038_1_0_1"/>
<dbReference type="InParanoid" id="Q7TSZ8"/>
<dbReference type="OMA" id="DMMSMEH"/>
<dbReference type="OrthoDB" id="10261408at2759"/>
<dbReference type="PhylomeDB" id="Q7TSZ8"/>
<dbReference type="TreeFam" id="TF331184"/>
<dbReference type="BioGRID-ORCS" id="66830">
    <property type="hits" value="7 hits in 78 CRISPR screens"/>
</dbReference>
<dbReference type="ChiTaRS" id="Nacc1">
    <property type="organism name" value="mouse"/>
</dbReference>
<dbReference type="PRO" id="PR:Q7TSZ8"/>
<dbReference type="Proteomes" id="UP000000589">
    <property type="component" value="Chromosome 8"/>
</dbReference>
<dbReference type="RNAct" id="Q7TSZ8">
    <property type="molecule type" value="protein"/>
</dbReference>
<dbReference type="Bgee" id="ENSMUSG00000001910">
    <property type="expression patterns" value="Expressed in embryonic post-anal tail and 229 other cell types or tissues"/>
</dbReference>
<dbReference type="ExpressionAtlas" id="Q7TSZ8">
    <property type="expression patterns" value="baseline and differential"/>
</dbReference>
<dbReference type="GO" id="GO:0030054">
    <property type="term" value="C:cell junction"/>
    <property type="evidence" value="ECO:0007669"/>
    <property type="project" value="Ensembl"/>
</dbReference>
<dbReference type="GO" id="GO:0005737">
    <property type="term" value="C:cytoplasm"/>
    <property type="evidence" value="ECO:0007669"/>
    <property type="project" value="UniProtKB-SubCell"/>
</dbReference>
<dbReference type="GO" id="GO:0005654">
    <property type="term" value="C:nucleoplasm"/>
    <property type="evidence" value="ECO:0007669"/>
    <property type="project" value="Ensembl"/>
</dbReference>
<dbReference type="GO" id="GO:0005634">
    <property type="term" value="C:nucleus"/>
    <property type="evidence" value="ECO:0000250"/>
    <property type="project" value="UniProtKB"/>
</dbReference>
<dbReference type="GO" id="GO:0003677">
    <property type="term" value="F:DNA binding"/>
    <property type="evidence" value="ECO:0007669"/>
    <property type="project" value="InterPro"/>
</dbReference>
<dbReference type="GO" id="GO:0045892">
    <property type="term" value="P:negative regulation of DNA-templated transcription"/>
    <property type="evidence" value="ECO:0000250"/>
    <property type="project" value="UniProtKB"/>
</dbReference>
<dbReference type="GO" id="GO:0008284">
    <property type="term" value="P:positive regulation of cell population proliferation"/>
    <property type="evidence" value="ECO:0007669"/>
    <property type="project" value="Ensembl"/>
</dbReference>
<dbReference type="CDD" id="cd18290">
    <property type="entry name" value="BTB_POZ_BTBD14B_NAC1"/>
    <property type="match status" value="1"/>
</dbReference>
<dbReference type="FunFam" id="1.10.10.2590:FF:000002">
    <property type="entry name" value="Putative nucleus accumbens-associated protein 2"/>
    <property type="match status" value="1"/>
</dbReference>
<dbReference type="FunFam" id="3.30.710.10:FF:000009">
    <property type="entry name" value="Zinc finger and BTB domain-containing 37"/>
    <property type="match status" value="1"/>
</dbReference>
<dbReference type="Gene3D" id="1.10.10.2590">
    <property type="entry name" value="BEN domain"/>
    <property type="match status" value="1"/>
</dbReference>
<dbReference type="Gene3D" id="3.30.710.10">
    <property type="entry name" value="Potassium Channel Kv1.1, Chain A"/>
    <property type="match status" value="1"/>
</dbReference>
<dbReference type="InterPro" id="IPR018379">
    <property type="entry name" value="BEN_domain"/>
</dbReference>
<dbReference type="InterPro" id="IPR000210">
    <property type="entry name" value="BTB/POZ_dom"/>
</dbReference>
<dbReference type="InterPro" id="IPR011333">
    <property type="entry name" value="SKP1/BTB/POZ_sf"/>
</dbReference>
<dbReference type="InterPro" id="IPR050457">
    <property type="entry name" value="ZnFinger_BTB_dom_contain"/>
</dbReference>
<dbReference type="PANTHER" id="PTHR46105">
    <property type="entry name" value="AGAP004733-PA"/>
    <property type="match status" value="1"/>
</dbReference>
<dbReference type="PANTHER" id="PTHR46105:SF3">
    <property type="entry name" value="NUCLEUS ACCUMBENS-ASSOCIATED PROTEIN 1"/>
    <property type="match status" value="1"/>
</dbReference>
<dbReference type="Pfam" id="PF10523">
    <property type="entry name" value="BEN"/>
    <property type="match status" value="1"/>
</dbReference>
<dbReference type="Pfam" id="PF00651">
    <property type="entry name" value="BTB"/>
    <property type="match status" value="1"/>
</dbReference>
<dbReference type="SMART" id="SM01025">
    <property type="entry name" value="BEN"/>
    <property type="match status" value="1"/>
</dbReference>
<dbReference type="SMART" id="SM00225">
    <property type="entry name" value="BTB"/>
    <property type="match status" value="1"/>
</dbReference>
<dbReference type="SUPFAM" id="SSF54695">
    <property type="entry name" value="POZ domain"/>
    <property type="match status" value="1"/>
</dbReference>
<dbReference type="PROSITE" id="PS51457">
    <property type="entry name" value="BEN"/>
    <property type="match status" value="1"/>
</dbReference>
<dbReference type="PROSITE" id="PS50097">
    <property type="entry name" value="BTB"/>
    <property type="match status" value="1"/>
</dbReference>
<proteinExistence type="evidence at protein level"/>
<accession>Q7TSZ8</accession>
<accession>Q80X97</accession>
<accession>Q9CZ72</accession>
<sequence>MAQTLQMEIPNFGNSILECLNEQRLQGLYCDVSVVVKGHAFKAHRAVLAASSSYFRDLFNSSRSAVVELPAAVQPQSFQQILTFCYTGRLSMNMGDQFLLIYTAGFLQIQEIMEKGTEFFLKVSSPSCDSQGLHPEEAPSSEPQSPVAQTLGWPACSTPLPLVSRVKTEQELDSVQCTPMAKRLWDSSQKEAGGSGGNNGSRKMAKFSTPDLALNRMPQPLSMATATAAVAVVAVGGCVSGPSMSERTSPGTSSAYTSDSPSSYHNEEDEEEDAGEEGTDEQYRQICNMYTMYSMLNVGQTAEKVEALPEQVVLESRSRIRVRQDLASLPAELINQIGNRCHPKLYDEGDPSEKLELVTGTNVYITRAQLMNCHVSAGTRHKVLLRRLLASFFDRNTLANSCGTGIRSSTNDPRRKPLDSRVLHAVKYYCQNFAPNFKESEMNAIAADMCTNARRVVRKSWLPKTKPLHLVEGDNYSSFISDTCKIEPDMMSMEHSFETASHDGEAGPSAEVLQ</sequence>
<reference key="1">
    <citation type="journal article" date="2005" name="Science">
        <title>The transcriptional landscape of the mammalian genome.</title>
        <authorList>
            <person name="Carninci P."/>
            <person name="Kasukawa T."/>
            <person name="Katayama S."/>
            <person name="Gough J."/>
            <person name="Frith M.C."/>
            <person name="Maeda N."/>
            <person name="Oyama R."/>
            <person name="Ravasi T."/>
            <person name="Lenhard B."/>
            <person name="Wells C."/>
            <person name="Kodzius R."/>
            <person name="Shimokawa K."/>
            <person name="Bajic V.B."/>
            <person name="Brenner S.E."/>
            <person name="Batalov S."/>
            <person name="Forrest A.R."/>
            <person name="Zavolan M."/>
            <person name="Davis M.J."/>
            <person name="Wilming L.G."/>
            <person name="Aidinis V."/>
            <person name="Allen J.E."/>
            <person name="Ambesi-Impiombato A."/>
            <person name="Apweiler R."/>
            <person name="Aturaliya R.N."/>
            <person name="Bailey T.L."/>
            <person name="Bansal M."/>
            <person name="Baxter L."/>
            <person name="Beisel K.W."/>
            <person name="Bersano T."/>
            <person name="Bono H."/>
            <person name="Chalk A.M."/>
            <person name="Chiu K.P."/>
            <person name="Choudhary V."/>
            <person name="Christoffels A."/>
            <person name="Clutterbuck D.R."/>
            <person name="Crowe M.L."/>
            <person name="Dalla E."/>
            <person name="Dalrymple B.P."/>
            <person name="de Bono B."/>
            <person name="Della Gatta G."/>
            <person name="di Bernardo D."/>
            <person name="Down T."/>
            <person name="Engstrom P."/>
            <person name="Fagiolini M."/>
            <person name="Faulkner G."/>
            <person name="Fletcher C.F."/>
            <person name="Fukushima T."/>
            <person name="Furuno M."/>
            <person name="Futaki S."/>
            <person name="Gariboldi M."/>
            <person name="Georgii-Hemming P."/>
            <person name="Gingeras T.R."/>
            <person name="Gojobori T."/>
            <person name="Green R.E."/>
            <person name="Gustincich S."/>
            <person name="Harbers M."/>
            <person name="Hayashi Y."/>
            <person name="Hensch T.K."/>
            <person name="Hirokawa N."/>
            <person name="Hill D."/>
            <person name="Huminiecki L."/>
            <person name="Iacono M."/>
            <person name="Ikeo K."/>
            <person name="Iwama A."/>
            <person name="Ishikawa T."/>
            <person name="Jakt M."/>
            <person name="Kanapin A."/>
            <person name="Katoh M."/>
            <person name="Kawasawa Y."/>
            <person name="Kelso J."/>
            <person name="Kitamura H."/>
            <person name="Kitano H."/>
            <person name="Kollias G."/>
            <person name="Krishnan S.P."/>
            <person name="Kruger A."/>
            <person name="Kummerfeld S.K."/>
            <person name="Kurochkin I.V."/>
            <person name="Lareau L.F."/>
            <person name="Lazarevic D."/>
            <person name="Lipovich L."/>
            <person name="Liu J."/>
            <person name="Liuni S."/>
            <person name="McWilliam S."/>
            <person name="Madan Babu M."/>
            <person name="Madera M."/>
            <person name="Marchionni L."/>
            <person name="Matsuda H."/>
            <person name="Matsuzawa S."/>
            <person name="Miki H."/>
            <person name="Mignone F."/>
            <person name="Miyake S."/>
            <person name="Morris K."/>
            <person name="Mottagui-Tabar S."/>
            <person name="Mulder N."/>
            <person name="Nakano N."/>
            <person name="Nakauchi H."/>
            <person name="Ng P."/>
            <person name="Nilsson R."/>
            <person name="Nishiguchi S."/>
            <person name="Nishikawa S."/>
            <person name="Nori F."/>
            <person name="Ohara O."/>
            <person name="Okazaki Y."/>
            <person name="Orlando V."/>
            <person name="Pang K.C."/>
            <person name="Pavan W.J."/>
            <person name="Pavesi G."/>
            <person name="Pesole G."/>
            <person name="Petrovsky N."/>
            <person name="Piazza S."/>
            <person name="Reed J."/>
            <person name="Reid J.F."/>
            <person name="Ring B.Z."/>
            <person name="Ringwald M."/>
            <person name="Rost B."/>
            <person name="Ruan Y."/>
            <person name="Salzberg S.L."/>
            <person name="Sandelin A."/>
            <person name="Schneider C."/>
            <person name="Schoenbach C."/>
            <person name="Sekiguchi K."/>
            <person name="Semple C.A."/>
            <person name="Seno S."/>
            <person name="Sessa L."/>
            <person name="Sheng Y."/>
            <person name="Shibata Y."/>
            <person name="Shimada H."/>
            <person name="Shimada K."/>
            <person name="Silva D."/>
            <person name="Sinclair B."/>
            <person name="Sperling S."/>
            <person name="Stupka E."/>
            <person name="Sugiura K."/>
            <person name="Sultana R."/>
            <person name="Takenaka Y."/>
            <person name="Taki K."/>
            <person name="Tammoja K."/>
            <person name="Tan S.L."/>
            <person name="Tang S."/>
            <person name="Taylor M.S."/>
            <person name="Tegner J."/>
            <person name="Teichmann S.A."/>
            <person name="Ueda H.R."/>
            <person name="van Nimwegen E."/>
            <person name="Verardo R."/>
            <person name="Wei C.L."/>
            <person name="Yagi K."/>
            <person name="Yamanishi H."/>
            <person name="Zabarovsky E."/>
            <person name="Zhu S."/>
            <person name="Zimmer A."/>
            <person name="Hide W."/>
            <person name="Bult C."/>
            <person name="Grimmond S.M."/>
            <person name="Teasdale R.D."/>
            <person name="Liu E.T."/>
            <person name="Brusic V."/>
            <person name="Quackenbush J."/>
            <person name="Wahlestedt C."/>
            <person name="Mattick J.S."/>
            <person name="Hume D.A."/>
            <person name="Kai C."/>
            <person name="Sasaki D."/>
            <person name="Tomaru Y."/>
            <person name="Fukuda S."/>
            <person name="Kanamori-Katayama M."/>
            <person name="Suzuki M."/>
            <person name="Aoki J."/>
            <person name="Arakawa T."/>
            <person name="Iida J."/>
            <person name="Imamura K."/>
            <person name="Itoh M."/>
            <person name="Kato T."/>
            <person name="Kawaji H."/>
            <person name="Kawagashira N."/>
            <person name="Kawashima T."/>
            <person name="Kojima M."/>
            <person name="Kondo S."/>
            <person name="Konno H."/>
            <person name="Nakano K."/>
            <person name="Ninomiya N."/>
            <person name="Nishio T."/>
            <person name="Okada M."/>
            <person name="Plessy C."/>
            <person name="Shibata K."/>
            <person name="Shiraki T."/>
            <person name="Suzuki S."/>
            <person name="Tagami M."/>
            <person name="Waki K."/>
            <person name="Watahiki A."/>
            <person name="Okamura-Oho Y."/>
            <person name="Suzuki H."/>
            <person name="Kawai J."/>
            <person name="Hayashizaki Y."/>
        </authorList>
    </citation>
    <scope>NUCLEOTIDE SEQUENCE [LARGE SCALE MRNA]</scope>
    <source>
        <strain>C57BL/6J</strain>
        <tissue>Embryo</tissue>
    </source>
</reference>
<reference key="2">
    <citation type="journal article" date="2004" name="Genome Res.">
        <title>The status, quality, and expansion of the NIH full-length cDNA project: the Mammalian Gene Collection (MGC).</title>
        <authorList>
            <consortium name="The MGC Project Team"/>
        </authorList>
    </citation>
    <scope>NUCLEOTIDE SEQUENCE [LARGE SCALE MRNA]</scope>
    <source>
        <strain>C57BL/6J</strain>
        <tissue>Brain</tissue>
    </source>
</reference>
<reference key="3">
    <citation type="journal article" date="2003" name="Neuroscience">
        <title>The mouse Nac1 gene, encoding a cocaine-regulated bric-a-brac tramtrac broad complex/pox virus and zinc finger protein, is regulated by AP1.</title>
        <authorList>
            <person name="Mackler S.A."/>
            <person name="Homan Y.X."/>
            <person name="Korutla L."/>
            <person name="Conti A.C."/>
            <person name="Blendy J.A."/>
        </authorList>
    </citation>
    <scope>TISSUE SPECIFICITY</scope>
    <scope>ALTERNATIVE SPLICING</scope>
</reference>
<reference key="4">
    <citation type="journal article" date="2006" name="Proc. Natl. Acad. Sci. U.S.A.">
        <title>A BTB/POZ protein, NAC-1, is related to tumor recurrence and is essential for tumor growth and survival.</title>
        <authorList>
            <person name="Nakayama K."/>
            <person name="Nakayama N."/>
            <person name="Davidson B."/>
            <person name="Sheu J.-J.C."/>
            <person name="Jinawath N."/>
            <person name="Santillan A."/>
            <person name="Salani R."/>
            <person name="Bristow R.E."/>
            <person name="Morin P.J."/>
            <person name="Kurman R.J."/>
            <person name="Wang T.-L."/>
            <person name="Shih I.-M."/>
        </authorList>
    </citation>
    <scope>FUNCTION</scope>
</reference>
<reference key="5">
    <citation type="journal article" date="2008" name="Behav. Brain Res.">
        <title>Requirement for the POZ/BTB protein NAC1 in acute but not chronic psychomotor stimulant response.</title>
        <authorList>
            <person name="Mackler S."/>
            <person name="Pacchioni A."/>
            <person name="Degnan R."/>
            <person name="Homan Y."/>
            <person name="Conti A.C."/>
            <person name="Kalivas P."/>
            <person name="Blendy J.A."/>
        </authorList>
    </citation>
    <scope>FUNCTION</scope>
    <scope>DISRUPTION PHENOTYPE</scope>
</reference>
<reference key="6">
    <citation type="journal article" date="2010" name="Cell">
        <title>A tissue-specific atlas of mouse protein phosphorylation and expression.</title>
        <authorList>
            <person name="Huttlin E.L."/>
            <person name="Jedrychowski M.P."/>
            <person name="Elias J.E."/>
            <person name="Goswami T."/>
            <person name="Rad R."/>
            <person name="Beausoleil S.A."/>
            <person name="Villen J."/>
            <person name="Haas W."/>
            <person name="Sowa M.E."/>
            <person name="Gygi S.P."/>
        </authorList>
    </citation>
    <scope>PHOSPHORYLATION [LARGE SCALE ANALYSIS] AT SER-492 AND SER-496</scope>
    <scope>IDENTIFICATION BY MASS SPECTROMETRY [LARGE SCALE ANALYSIS]</scope>
    <source>
        <tissue>Brain</tissue>
        <tissue>Kidney</tissue>
    </source>
</reference>
<gene>
    <name type="primary">Nacc1</name>
    <name type="synonym">Btbd14b</name>
    <name type="synonym">Nac1</name>
</gene>
<evidence type="ECO:0000250" key="1"/>
<evidence type="ECO:0000250" key="2">
    <source>
        <dbReference type="UniProtKB" id="O35260"/>
    </source>
</evidence>
<evidence type="ECO:0000250" key="3">
    <source>
        <dbReference type="UniProtKB" id="Q96RE7"/>
    </source>
</evidence>
<evidence type="ECO:0000255" key="4">
    <source>
        <dbReference type="PROSITE-ProRule" id="PRU00037"/>
    </source>
</evidence>
<evidence type="ECO:0000255" key="5">
    <source>
        <dbReference type="PROSITE-ProRule" id="PRU00784"/>
    </source>
</evidence>
<evidence type="ECO:0000256" key="6">
    <source>
        <dbReference type="SAM" id="MobiDB-lite"/>
    </source>
</evidence>
<evidence type="ECO:0000269" key="7">
    <source>
    </source>
</evidence>
<evidence type="ECO:0000269" key="8">
    <source>
    </source>
</evidence>
<evidence type="ECO:0000269" key="9">
    <source>
    </source>
</evidence>
<evidence type="ECO:0000305" key="10"/>
<evidence type="ECO:0007744" key="11">
    <source>
    </source>
</evidence>
<name>NACC1_MOUSE</name>